<evidence type="ECO:0000250" key="1"/>
<evidence type="ECO:0000305" key="2"/>
<gene>
    <name type="ordered locus">BH3385</name>
</gene>
<dbReference type="EC" id="2.7.1.25"/>
<dbReference type="EMBL" id="BA000004">
    <property type="protein sequence ID" value="BAB07104.1"/>
    <property type="molecule type" value="Genomic_DNA"/>
</dbReference>
<dbReference type="PIR" id="A84073">
    <property type="entry name" value="A84073"/>
</dbReference>
<dbReference type="RefSeq" id="WP_010899526.1">
    <property type="nucleotide sequence ID" value="NC_002570.2"/>
</dbReference>
<dbReference type="SMR" id="Q9K7H6"/>
<dbReference type="STRING" id="272558.gene:10729298"/>
<dbReference type="KEGG" id="bha:BH3385"/>
<dbReference type="eggNOG" id="COG0529">
    <property type="taxonomic scope" value="Bacteria"/>
</dbReference>
<dbReference type="HOGENOM" id="CLU_046932_1_0_9"/>
<dbReference type="OrthoDB" id="9804504at2"/>
<dbReference type="UniPathway" id="UPA00140">
    <property type="reaction ID" value="UER00205"/>
</dbReference>
<dbReference type="Proteomes" id="UP000001258">
    <property type="component" value="Chromosome"/>
</dbReference>
<dbReference type="GO" id="GO:0004020">
    <property type="term" value="F:adenylylsulfate kinase activity"/>
    <property type="evidence" value="ECO:0007669"/>
    <property type="project" value="UniProtKB-UniRule"/>
</dbReference>
<dbReference type="GO" id="GO:0005524">
    <property type="term" value="F:ATP binding"/>
    <property type="evidence" value="ECO:0007669"/>
    <property type="project" value="UniProtKB-UniRule"/>
</dbReference>
<dbReference type="GO" id="GO:0070814">
    <property type="term" value="P:hydrogen sulfide biosynthetic process"/>
    <property type="evidence" value="ECO:0007669"/>
    <property type="project" value="UniProtKB-UniRule"/>
</dbReference>
<dbReference type="GO" id="GO:0000103">
    <property type="term" value="P:sulfate assimilation"/>
    <property type="evidence" value="ECO:0007669"/>
    <property type="project" value="UniProtKB-UniRule"/>
</dbReference>
<dbReference type="CDD" id="cd02027">
    <property type="entry name" value="APSK"/>
    <property type="match status" value="1"/>
</dbReference>
<dbReference type="FunFam" id="3.40.50.300:FF:000212">
    <property type="entry name" value="Adenylyl-sulfate kinase"/>
    <property type="match status" value="1"/>
</dbReference>
<dbReference type="Gene3D" id="3.40.50.300">
    <property type="entry name" value="P-loop containing nucleotide triphosphate hydrolases"/>
    <property type="match status" value="1"/>
</dbReference>
<dbReference type="HAMAP" id="MF_00065">
    <property type="entry name" value="Adenylyl_sulf_kinase"/>
    <property type="match status" value="1"/>
</dbReference>
<dbReference type="InterPro" id="IPR002891">
    <property type="entry name" value="APS_kinase"/>
</dbReference>
<dbReference type="InterPro" id="IPR027417">
    <property type="entry name" value="P-loop_NTPase"/>
</dbReference>
<dbReference type="NCBIfam" id="TIGR00455">
    <property type="entry name" value="apsK"/>
    <property type="match status" value="1"/>
</dbReference>
<dbReference type="NCBIfam" id="NF003013">
    <property type="entry name" value="PRK03846.1"/>
    <property type="match status" value="1"/>
</dbReference>
<dbReference type="PANTHER" id="PTHR11055">
    <property type="entry name" value="BIFUNCTIONAL 3'-PHOSPHOADENOSINE 5'-PHOSPHOSULFATE SYNTHASE"/>
    <property type="match status" value="1"/>
</dbReference>
<dbReference type="PANTHER" id="PTHR11055:SF1">
    <property type="entry name" value="PAPS SYNTHETASE, ISOFORM D"/>
    <property type="match status" value="1"/>
</dbReference>
<dbReference type="Pfam" id="PF01583">
    <property type="entry name" value="APS_kinase"/>
    <property type="match status" value="1"/>
</dbReference>
<dbReference type="SUPFAM" id="SSF52540">
    <property type="entry name" value="P-loop containing nucleoside triphosphate hydrolases"/>
    <property type="match status" value="1"/>
</dbReference>
<proteinExistence type="inferred from homology"/>
<organism>
    <name type="scientific">Halalkalibacterium halodurans (strain ATCC BAA-125 / DSM 18197 / FERM 7344 / JCM 9153 / C-125)</name>
    <name type="common">Bacillus halodurans</name>
    <dbReference type="NCBI Taxonomy" id="272558"/>
    <lineage>
        <taxon>Bacteria</taxon>
        <taxon>Bacillati</taxon>
        <taxon>Bacillota</taxon>
        <taxon>Bacilli</taxon>
        <taxon>Bacillales</taxon>
        <taxon>Bacillaceae</taxon>
        <taxon>Halalkalibacterium (ex Joshi et al. 2022)</taxon>
    </lineage>
</organism>
<accession>Q9K7H6</accession>
<name>CYSC2_HALH5</name>
<keyword id="KW-0067">ATP-binding</keyword>
<keyword id="KW-0418">Kinase</keyword>
<keyword id="KW-0547">Nucleotide-binding</keyword>
<keyword id="KW-0597">Phosphoprotein</keyword>
<keyword id="KW-1185">Reference proteome</keyword>
<keyword id="KW-0808">Transferase</keyword>
<comment type="function">
    <text evidence="1">Catalyzes the synthesis of activated sulfate.</text>
</comment>
<comment type="catalytic activity">
    <reaction>
        <text>adenosine 5'-phosphosulfate + ATP = 3'-phosphoadenylyl sulfate + ADP + H(+)</text>
        <dbReference type="Rhea" id="RHEA:24152"/>
        <dbReference type="ChEBI" id="CHEBI:15378"/>
        <dbReference type="ChEBI" id="CHEBI:30616"/>
        <dbReference type="ChEBI" id="CHEBI:58243"/>
        <dbReference type="ChEBI" id="CHEBI:58339"/>
        <dbReference type="ChEBI" id="CHEBI:456216"/>
        <dbReference type="EC" id="2.7.1.25"/>
    </reaction>
</comment>
<comment type="pathway">
    <text>Sulfur metabolism; hydrogen sulfide biosynthesis; sulfite from sulfate: step 2/3.</text>
</comment>
<comment type="similarity">
    <text evidence="2">Belongs to the APS kinase family.</text>
</comment>
<sequence>MKSNSQDAASIVWHPQLVTKQARNQSNGHKSRMIWFTGLSGSGKSTIANAVQAELFKRGIQVYVLDGDNLRHGLNADLSFSMEDRKENIRRTAEVGKLFVDAGLVVLAALISPVEEERQRARSRFAEDEFLEVYVSCTLQECEKRDPKGLYKKARKGEIPQFTGIHQPYEEPKNPDICIDTTDRTVEQSVQIILPIILEKIAWKEGEQ</sequence>
<reference key="1">
    <citation type="journal article" date="2000" name="Nucleic Acids Res.">
        <title>Complete genome sequence of the alkaliphilic bacterium Bacillus halodurans and genomic sequence comparison with Bacillus subtilis.</title>
        <authorList>
            <person name="Takami H."/>
            <person name="Nakasone K."/>
            <person name="Takaki Y."/>
            <person name="Maeno G."/>
            <person name="Sasaki R."/>
            <person name="Masui N."/>
            <person name="Fuji F."/>
            <person name="Hirama C."/>
            <person name="Nakamura Y."/>
            <person name="Ogasawara N."/>
            <person name="Kuhara S."/>
            <person name="Horikoshi K."/>
        </authorList>
    </citation>
    <scope>NUCLEOTIDE SEQUENCE [LARGE SCALE GENOMIC DNA]</scope>
    <source>
        <strain>ATCC BAA-125 / DSM 18197 / FERM 7344 / JCM 9153 / C-125</strain>
    </source>
</reference>
<protein>
    <recommendedName>
        <fullName>Probable adenylyl-sulfate kinase</fullName>
        <ecNumber>2.7.1.25</ecNumber>
    </recommendedName>
    <alternativeName>
        <fullName>APS kinase</fullName>
    </alternativeName>
    <alternativeName>
        <fullName>ATP adenosine-5'-phosphosulfate 3'-phosphotransferase</fullName>
    </alternativeName>
    <alternativeName>
        <fullName>Adenosine-5'-phosphosulfate kinase</fullName>
    </alternativeName>
</protein>
<feature type="chain" id="PRO_0000105902" description="Probable adenylyl-sulfate kinase">
    <location>
        <begin position="1"/>
        <end position="208"/>
    </location>
</feature>
<feature type="active site" description="Phosphoserine intermediate" evidence="1">
    <location>
        <position position="112"/>
    </location>
</feature>
<feature type="binding site" evidence="1">
    <location>
        <begin position="38"/>
        <end position="45"/>
    </location>
    <ligand>
        <name>ATP</name>
        <dbReference type="ChEBI" id="CHEBI:30616"/>
    </ligand>
</feature>